<feature type="chain" id="PRO_1000002232" description="Acetate kinase">
    <location>
        <begin position="1"/>
        <end position="400"/>
    </location>
</feature>
<feature type="active site" description="Proton donor/acceptor" evidence="1">
    <location>
        <position position="150"/>
    </location>
</feature>
<feature type="binding site" evidence="1">
    <location>
        <position position="10"/>
    </location>
    <ligand>
        <name>Mg(2+)</name>
        <dbReference type="ChEBI" id="CHEBI:18420"/>
    </ligand>
</feature>
<feature type="binding site" evidence="1">
    <location>
        <position position="17"/>
    </location>
    <ligand>
        <name>ATP</name>
        <dbReference type="ChEBI" id="CHEBI:30616"/>
    </ligand>
</feature>
<feature type="binding site" evidence="1">
    <location>
        <position position="91"/>
    </location>
    <ligand>
        <name>substrate</name>
    </ligand>
</feature>
<feature type="binding site" evidence="1">
    <location>
        <begin position="210"/>
        <end position="214"/>
    </location>
    <ligand>
        <name>ATP</name>
        <dbReference type="ChEBI" id="CHEBI:30616"/>
    </ligand>
</feature>
<feature type="binding site" evidence="1">
    <location>
        <begin position="285"/>
        <end position="287"/>
    </location>
    <ligand>
        <name>ATP</name>
        <dbReference type="ChEBI" id="CHEBI:30616"/>
    </ligand>
</feature>
<feature type="binding site" evidence="1">
    <location>
        <begin position="333"/>
        <end position="337"/>
    </location>
    <ligand>
        <name>ATP</name>
        <dbReference type="ChEBI" id="CHEBI:30616"/>
    </ligand>
</feature>
<feature type="binding site" evidence="1">
    <location>
        <position position="387"/>
    </location>
    <ligand>
        <name>Mg(2+)</name>
        <dbReference type="ChEBI" id="CHEBI:18420"/>
    </ligand>
</feature>
<feature type="site" description="Transition state stabilizer" evidence="1">
    <location>
        <position position="182"/>
    </location>
</feature>
<feature type="site" description="Transition state stabilizer" evidence="1">
    <location>
        <position position="243"/>
    </location>
</feature>
<reference key="1">
    <citation type="journal article" date="2004" name="Proc. Natl. Acad. Sci. U.S.A.">
        <title>Genome sequence of the enterobacterial phytopathogen Erwinia carotovora subsp. atroseptica and characterization of virulence factors.</title>
        <authorList>
            <person name="Bell K.S."/>
            <person name="Sebaihia M."/>
            <person name="Pritchard L."/>
            <person name="Holden M.T.G."/>
            <person name="Hyman L.J."/>
            <person name="Holeva M.C."/>
            <person name="Thomson N.R."/>
            <person name="Bentley S.D."/>
            <person name="Churcher L.J.C."/>
            <person name="Mungall K."/>
            <person name="Atkin R."/>
            <person name="Bason N."/>
            <person name="Brooks K."/>
            <person name="Chillingworth T."/>
            <person name="Clark K."/>
            <person name="Doggett J."/>
            <person name="Fraser A."/>
            <person name="Hance Z."/>
            <person name="Hauser H."/>
            <person name="Jagels K."/>
            <person name="Moule S."/>
            <person name="Norbertczak H."/>
            <person name="Ormond D."/>
            <person name="Price C."/>
            <person name="Quail M.A."/>
            <person name="Sanders M."/>
            <person name="Walker D."/>
            <person name="Whitehead S."/>
            <person name="Salmond G.P.C."/>
            <person name="Birch P.R.J."/>
            <person name="Parkhill J."/>
            <person name="Toth I.K."/>
        </authorList>
    </citation>
    <scope>NUCLEOTIDE SEQUENCE [LARGE SCALE GENOMIC DNA]</scope>
    <source>
        <strain>SCRI 1043 / ATCC BAA-672</strain>
    </source>
</reference>
<name>ACKA_PECAS</name>
<dbReference type="EC" id="2.7.2.1" evidence="1"/>
<dbReference type="EMBL" id="BX950851">
    <property type="protein sequence ID" value="CAG75938.1"/>
    <property type="molecule type" value="Genomic_DNA"/>
</dbReference>
<dbReference type="RefSeq" id="WP_011094564.1">
    <property type="nucleotide sequence ID" value="NC_004547.2"/>
</dbReference>
<dbReference type="SMR" id="Q6D2Q6"/>
<dbReference type="STRING" id="218491.ECA3039"/>
<dbReference type="GeneID" id="57209723"/>
<dbReference type="KEGG" id="eca:ECA3039"/>
<dbReference type="PATRIC" id="fig|218491.5.peg.3070"/>
<dbReference type="eggNOG" id="COG0282">
    <property type="taxonomic scope" value="Bacteria"/>
</dbReference>
<dbReference type="HOGENOM" id="CLU_020352_0_0_6"/>
<dbReference type="OrthoDB" id="9802453at2"/>
<dbReference type="UniPathway" id="UPA00340">
    <property type="reaction ID" value="UER00458"/>
</dbReference>
<dbReference type="Proteomes" id="UP000007966">
    <property type="component" value="Chromosome"/>
</dbReference>
<dbReference type="GO" id="GO:0005829">
    <property type="term" value="C:cytosol"/>
    <property type="evidence" value="ECO:0007669"/>
    <property type="project" value="TreeGrafter"/>
</dbReference>
<dbReference type="GO" id="GO:0008776">
    <property type="term" value="F:acetate kinase activity"/>
    <property type="evidence" value="ECO:0007669"/>
    <property type="project" value="UniProtKB-UniRule"/>
</dbReference>
<dbReference type="GO" id="GO:0005524">
    <property type="term" value="F:ATP binding"/>
    <property type="evidence" value="ECO:0007669"/>
    <property type="project" value="UniProtKB-KW"/>
</dbReference>
<dbReference type="GO" id="GO:0000287">
    <property type="term" value="F:magnesium ion binding"/>
    <property type="evidence" value="ECO:0007669"/>
    <property type="project" value="UniProtKB-UniRule"/>
</dbReference>
<dbReference type="GO" id="GO:0006083">
    <property type="term" value="P:acetate metabolic process"/>
    <property type="evidence" value="ECO:0007669"/>
    <property type="project" value="TreeGrafter"/>
</dbReference>
<dbReference type="GO" id="GO:0006085">
    <property type="term" value="P:acetyl-CoA biosynthetic process"/>
    <property type="evidence" value="ECO:0007669"/>
    <property type="project" value="UniProtKB-UniRule"/>
</dbReference>
<dbReference type="CDD" id="cd24010">
    <property type="entry name" value="ASKHA_NBD_AcK_PK"/>
    <property type="match status" value="1"/>
</dbReference>
<dbReference type="FunFam" id="3.30.420.40:FF:000041">
    <property type="entry name" value="Acetate kinase"/>
    <property type="match status" value="1"/>
</dbReference>
<dbReference type="FunFam" id="3.30.420.40:FF:000042">
    <property type="entry name" value="Acetate kinase"/>
    <property type="match status" value="1"/>
</dbReference>
<dbReference type="Gene3D" id="3.30.420.40">
    <property type="match status" value="2"/>
</dbReference>
<dbReference type="HAMAP" id="MF_00020">
    <property type="entry name" value="Acetate_kinase"/>
    <property type="match status" value="1"/>
</dbReference>
<dbReference type="InterPro" id="IPR004372">
    <property type="entry name" value="Ac/propionate_kinase"/>
</dbReference>
<dbReference type="InterPro" id="IPR000890">
    <property type="entry name" value="Aliphatic_acid_kin_short-chain"/>
</dbReference>
<dbReference type="InterPro" id="IPR023865">
    <property type="entry name" value="Aliphatic_acid_kinase_CS"/>
</dbReference>
<dbReference type="InterPro" id="IPR043129">
    <property type="entry name" value="ATPase_NBD"/>
</dbReference>
<dbReference type="NCBIfam" id="TIGR00016">
    <property type="entry name" value="ackA"/>
    <property type="match status" value="1"/>
</dbReference>
<dbReference type="PANTHER" id="PTHR21060">
    <property type="entry name" value="ACETATE KINASE"/>
    <property type="match status" value="1"/>
</dbReference>
<dbReference type="PANTHER" id="PTHR21060:SF21">
    <property type="entry name" value="ACETATE KINASE"/>
    <property type="match status" value="1"/>
</dbReference>
<dbReference type="Pfam" id="PF00871">
    <property type="entry name" value="Acetate_kinase"/>
    <property type="match status" value="1"/>
</dbReference>
<dbReference type="PIRSF" id="PIRSF000722">
    <property type="entry name" value="Acetate_prop_kin"/>
    <property type="match status" value="1"/>
</dbReference>
<dbReference type="PRINTS" id="PR00471">
    <property type="entry name" value="ACETATEKNASE"/>
</dbReference>
<dbReference type="SUPFAM" id="SSF53067">
    <property type="entry name" value="Actin-like ATPase domain"/>
    <property type="match status" value="2"/>
</dbReference>
<dbReference type="PROSITE" id="PS01075">
    <property type="entry name" value="ACETATE_KINASE_1"/>
    <property type="match status" value="1"/>
</dbReference>
<dbReference type="PROSITE" id="PS01076">
    <property type="entry name" value="ACETATE_KINASE_2"/>
    <property type="match status" value="1"/>
</dbReference>
<sequence length="400" mass="43369">MSSKLVLVLNCGSSSLKFAIIDAINGEEYLSGLAECFNLPEARIKWKMDGGKQDAELGAGAAHSEALNFIVNTILSQKPELSAQLVAIGHRIVHGGEKFTKSAIITDDVLQGIKDSVPFAPLHNPAHLIGIDEALKSFPHLTDKNVAVFDTAFHQTMPEESYLYALPYKLYKENHIRRYGAHGTSHYFVSREAAKVLNKPVEELNVITCHLGNGGSVTAIRNGECVDTSMGLTPLEGLVMGTRSGDIDPAIIFHLHDALGMDVASINTLLTKESGLLGLTEVTSDCRYVEDNYETKADAKRAMDVYCHRLAKYIGSYAALMEGRLDAVIFTGGIGENAAMVRELSLKKLGLLGFDVDHERNLAARFGKGGNIAKDGTRPALVIPTNEELVIAEDAYRLTA</sequence>
<comment type="function">
    <text evidence="1">Catalyzes the formation of acetyl phosphate from acetate and ATP. Can also catalyze the reverse reaction.</text>
</comment>
<comment type="catalytic activity">
    <reaction evidence="1">
        <text>acetate + ATP = acetyl phosphate + ADP</text>
        <dbReference type="Rhea" id="RHEA:11352"/>
        <dbReference type="ChEBI" id="CHEBI:22191"/>
        <dbReference type="ChEBI" id="CHEBI:30089"/>
        <dbReference type="ChEBI" id="CHEBI:30616"/>
        <dbReference type="ChEBI" id="CHEBI:456216"/>
        <dbReference type="EC" id="2.7.2.1"/>
    </reaction>
</comment>
<comment type="cofactor">
    <cofactor evidence="1">
        <name>Mg(2+)</name>
        <dbReference type="ChEBI" id="CHEBI:18420"/>
    </cofactor>
    <cofactor evidence="1">
        <name>Mn(2+)</name>
        <dbReference type="ChEBI" id="CHEBI:29035"/>
    </cofactor>
    <text evidence="1">Mg(2+). Can also accept Mn(2+).</text>
</comment>
<comment type="pathway">
    <text evidence="1">Metabolic intermediate biosynthesis; acetyl-CoA biosynthesis; acetyl-CoA from acetate: step 1/2.</text>
</comment>
<comment type="subunit">
    <text evidence="1">Homodimer.</text>
</comment>
<comment type="subcellular location">
    <subcellularLocation>
        <location evidence="1">Cytoplasm</location>
    </subcellularLocation>
</comment>
<comment type="similarity">
    <text evidence="1">Belongs to the acetokinase family.</text>
</comment>
<gene>
    <name evidence="1" type="primary">ackA</name>
    <name type="ordered locus">ECA3039</name>
</gene>
<keyword id="KW-0067">ATP-binding</keyword>
<keyword id="KW-0963">Cytoplasm</keyword>
<keyword id="KW-0418">Kinase</keyword>
<keyword id="KW-0460">Magnesium</keyword>
<keyword id="KW-0479">Metal-binding</keyword>
<keyword id="KW-0547">Nucleotide-binding</keyword>
<keyword id="KW-1185">Reference proteome</keyword>
<keyword id="KW-0808">Transferase</keyword>
<evidence type="ECO:0000255" key="1">
    <source>
        <dbReference type="HAMAP-Rule" id="MF_00020"/>
    </source>
</evidence>
<accession>Q6D2Q6</accession>
<proteinExistence type="inferred from homology"/>
<organism>
    <name type="scientific">Pectobacterium atrosepticum (strain SCRI 1043 / ATCC BAA-672)</name>
    <name type="common">Erwinia carotovora subsp. atroseptica</name>
    <dbReference type="NCBI Taxonomy" id="218491"/>
    <lineage>
        <taxon>Bacteria</taxon>
        <taxon>Pseudomonadati</taxon>
        <taxon>Pseudomonadota</taxon>
        <taxon>Gammaproteobacteria</taxon>
        <taxon>Enterobacterales</taxon>
        <taxon>Pectobacteriaceae</taxon>
        <taxon>Pectobacterium</taxon>
    </lineage>
</organism>
<protein>
    <recommendedName>
        <fullName evidence="1">Acetate kinase</fullName>
        <ecNumber evidence="1">2.7.2.1</ecNumber>
    </recommendedName>
    <alternativeName>
        <fullName evidence="1">Acetokinase</fullName>
    </alternativeName>
</protein>